<reference key="1">
    <citation type="journal article" date="2007" name="PLoS ONE">
        <title>Paradoxical DNA repair and peroxide resistance gene conservation in Bacillus pumilus SAFR-032.</title>
        <authorList>
            <person name="Gioia J."/>
            <person name="Yerrapragada S."/>
            <person name="Qin X."/>
            <person name="Jiang H."/>
            <person name="Igboeli O.C."/>
            <person name="Muzny D."/>
            <person name="Dugan-Rocha S."/>
            <person name="Ding Y."/>
            <person name="Hawes A."/>
            <person name="Liu W."/>
            <person name="Perez L."/>
            <person name="Kovar C."/>
            <person name="Dinh H."/>
            <person name="Lee S."/>
            <person name="Nazareth L."/>
            <person name="Blyth P."/>
            <person name="Holder M."/>
            <person name="Buhay C."/>
            <person name="Tirumalai M.R."/>
            <person name="Liu Y."/>
            <person name="Dasgupta I."/>
            <person name="Bokhetache L."/>
            <person name="Fujita M."/>
            <person name="Karouia F."/>
            <person name="Eswara Moorthy P."/>
            <person name="Siefert J."/>
            <person name="Uzman A."/>
            <person name="Buzumbo P."/>
            <person name="Verma A."/>
            <person name="Zwiya H."/>
            <person name="McWilliams B.D."/>
            <person name="Olowu A."/>
            <person name="Clinkenbeard K.D."/>
            <person name="Newcombe D."/>
            <person name="Golebiewski L."/>
            <person name="Petrosino J.F."/>
            <person name="Nicholson W.L."/>
            <person name="Fox G.E."/>
            <person name="Venkateswaran K."/>
            <person name="Highlander S.K."/>
            <person name="Weinstock G.M."/>
        </authorList>
    </citation>
    <scope>NUCLEOTIDE SEQUENCE [LARGE SCALE GENOMIC DNA]</scope>
    <source>
        <strain>SAFR-032</strain>
    </source>
</reference>
<dbReference type="EMBL" id="CP000813">
    <property type="protein sequence ID" value="ABV63218.1"/>
    <property type="molecule type" value="Genomic_DNA"/>
</dbReference>
<dbReference type="RefSeq" id="WP_012010861.1">
    <property type="nucleotide sequence ID" value="NZ_VEHD01000002.1"/>
</dbReference>
<dbReference type="STRING" id="315750.BPUM_2558"/>
<dbReference type="GeneID" id="5621822"/>
<dbReference type="KEGG" id="bpu:BPUM_2558"/>
<dbReference type="eggNOG" id="COG2707">
    <property type="taxonomic scope" value="Bacteria"/>
</dbReference>
<dbReference type="HOGENOM" id="CLU_125889_1_0_9"/>
<dbReference type="OrthoDB" id="80306at2"/>
<dbReference type="Proteomes" id="UP000001355">
    <property type="component" value="Chromosome"/>
</dbReference>
<dbReference type="GO" id="GO:0005886">
    <property type="term" value="C:plasma membrane"/>
    <property type="evidence" value="ECO:0007669"/>
    <property type="project" value="UniProtKB-SubCell"/>
</dbReference>
<dbReference type="HAMAP" id="MF_01874">
    <property type="entry name" value="UPF0756"/>
    <property type="match status" value="1"/>
</dbReference>
<dbReference type="InterPro" id="IPR007382">
    <property type="entry name" value="UPF0756_TM"/>
</dbReference>
<dbReference type="PANTHER" id="PTHR38452">
    <property type="entry name" value="UPF0756 MEMBRANE PROTEIN YEAL"/>
    <property type="match status" value="1"/>
</dbReference>
<dbReference type="PANTHER" id="PTHR38452:SF1">
    <property type="entry name" value="UPF0756 MEMBRANE PROTEIN YEAL"/>
    <property type="match status" value="1"/>
</dbReference>
<dbReference type="Pfam" id="PF04284">
    <property type="entry name" value="DUF441"/>
    <property type="match status" value="1"/>
</dbReference>
<accession>A8FG51</accession>
<keyword id="KW-1003">Cell membrane</keyword>
<keyword id="KW-0472">Membrane</keyword>
<keyword id="KW-0812">Transmembrane</keyword>
<keyword id="KW-1133">Transmembrane helix</keyword>
<organism>
    <name type="scientific">Bacillus pumilus (strain SAFR-032)</name>
    <dbReference type="NCBI Taxonomy" id="315750"/>
    <lineage>
        <taxon>Bacteria</taxon>
        <taxon>Bacillati</taxon>
        <taxon>Bacillota</taxon>
        <taxon>Bacilli</taxon>
        <taxon>Bacillales</taxon>
        <taxon>Bacillaceae</taxon>
        <taxon>Bacillus</taxon>
    </lineage>
</organism>
<protein>
    <recommendedName>
        <fullName evidence="1">UPF0756 membrane protein BPUM_2558</fullName>
    </recommendedName>
</protein>
<name>Y2558_BACP2</name>
<feature type="chain" id="PRO_0000388833" description="UPF0756 membrane protein BPUM_2558">
    <location>
        <begin position="1"/>
        <end position="154"/>
    </location>
</feature>
<feature type="transmembrane region" description="Helical" evidence="1">
    <location>
        <begin position="8"/>
        <end position="28"/>
    </location>
</feature>
<feature type="transmembrane region" description="Helical" evidence="1">
    <location>
        <begin position="54"/>
        <end position="74"/>
    </location>
</feature>
<feature type="transmembrane region" description="Helical" evidence="1">
    <location>
        <begin position="87"/>
        <end position="107"/>
    </location>
</feature>
<feature type="transmembrane region" description="Helical" evidence="1">
    <location>
        <begin position="117"/>
        <end position="137"/>
    </location>
</feature>
<gene>
    <name type="ordered locus">BPUM_2558</name>
</gene>
<evidence type="ECO:0000255" key="1">
    <source>
        <dbReference type="HAMAP-Rule" id="MF_01874"/>
    </source>
</evidence>
<sequence length="154" mass="16009">MFTQANLFLVLLLVIALIAKNNSLILAVSVLIGIKLIGLDQKIFPVLQSKGINWGVTVITIAVLVPIATGDIGFKQLGEAVKSSYAWIALGAGILVALIAKNGIVLLENDPHITTALVFGTILAVSLFKGVAVGPLIGAGIAYLAMQAVKFFSG</sequence>
<comment type="subcellular location">
    <subcellularLocation>
        <location evidence="1">Cell membrane</location>
        <topology evidence="1">Multi-pass membrane protein</topology>
    </subcellularLocation>
</comment>
<comment type="similarity">
    <text evidence="1">Belongs to the UPF0756 family.</text>
</comment>
<proteinExistence type="inferred from homology"/>